<evidence type="ECO:0000255" key="1"/>
<evidence type="ECO:0000256" key="2">
    <source>
        <dbReference type="SAM" id="MobiDB-lite"/>
    </source>
</evidence>
<evidence type="ECO:0000269" key="3">
    <source>
    </source>
</evidence>
<evidence type="ECO:0000269" key="4">
    <source>
    </source>
</evidence>
<evidence type="ECO:0000305" key="5"/>
<accession>P17152</accession>
<accession>Q53YB2</accession>
<dbReference type="EMBL" id="X51804">
    <property type="protein sequence ID" value="CAA36102.1"/>
    <property type="molecule type" value="mRNA"/>
</dbReference>
<dbReference type="EMBL" id="AK311965">
    <property type="protein sequence ID" value="BAG34905.1"/>
    <property type="molecule type" value="mRNA"/>
</dbReference>
<dbReference type="EMBL" id="BT006768">
    <property type="protein sequence ID" value="AAP35414.1"/>
    <property type="molecule type" value="mRNA"/>
</dbReference>
<dbReference type="EMBL" id="AC087294">
    <property type="status" value="NOT_ANNOTATED_CDS"/>
    <property type="molecule type" value="Genomic_DNA"/>
</dbReference>
<dbReference type="EMBL" id="AC087393">
    <property type="status" value="NOT_ANNOTATED_CDS"/>
    <property type="molecule type" value="Genomic_DNA"/>
</dbReference>
<dbReference type="EMBL" id="CH471210">
    <property type="protein sequence ID" value="EAX02598.1"/>
    <property type="molecule type" value="Genomic_DNA"/>
</dbReference>
<dbReference type="EMBL" id="BC002819">
    <property type="protein sequence ID" value="AAH02819.1"/>
    <property type="molecule type" value="mRNA"/>
</dbReference>
<dbReference type="EMBL" id="BC005268">
    <property type="protein sequence ID" value="AAH05268.1"/>
    <property type="molecule type" value="mRNA"/>
</dbReference>
<dbReference type="EMBL" id="BC020815">
    <property type="protein sequence ID" value="AAH20815.1"/>
    <property type="molecule type" value="mRNA"/>
</dbReference>
<dbReference type="CCDS" id="CCDS11216.1"/>
<dbReference type="PIR" id="S15930">
    <property type="entry name" value="S15930"/>
</dbReference>
<dbReference type="RefSeq" id="NP_003867.1">
    <property type="nucleotide sequence ID" value="NM_003876.3"/>
</dbReference>
<dbReference type="BioGRID" id="114361">
    <property type="interactions" value="107"/>
</dbReference>
<dbReference type="FunCoup" id="P17152">
    <property type="interactions" value="1294"/>
</dbReference>
<dbReference type="IntAct" id="P17152">
    <property type="interactions" value="96"/>
</dbReference>
<dbReference type="MINT" id="P17152"/>
<dbReference type="STRING" id="9606.ENSP00000319992"/>
<dbReference type="iPTMnet" id="P17152"/>
<dbReference type="PhosphoSitePlus" id="P17152"/>
<dbReference type="SwissPalm" id="P17152"/>
<dbReference type="BioMuta" id="TMEM11"/>
<dbReference type="jPOST" id="P17152"/>
<dbReference type="MassIVE" id="P17152"/>
<dbReference type="PaxDb" id="9606-ENSP00000319992"/>
<dbReference type="PeptideAtlas" id="P17152"/>
<dbReference type="ProteomicsDB" id="53458"/>
<dbReference type="Pumba" id="P17152"/>
<dbReference type="TopDownProteomics" id="P17152"/>
<dbReference type="Antibodypedia" id="26137">
    <property type="antibodies" value="68 antibodies from 18 providers"/>
</dbReference>
<dbReference type="DNASU" id="8834"/>
<dbReference type="Ensembl" id="ENST00000317635.6">
    <property type="protein sequence ID" value="ENSP00000319992.6"/>
    <property type="gene ID" value="ENSG00000178307.10"/>
</dbReference>
<dbReference type="GeneID" id="8834"/>
<dbReference type="KEGG" id="hsa:8834"/>
<dbReference type="MANE-Select" id="ENST00000317635.6">
    <property type="protein sequence ID" value="ENSP00000319992.6"/>
    <property type="RefSeq nucleotide sequence ID" value="NM_003876.3"/>
    <property type="RefSeq protein sequence ID" value="NP_003867.1"/>
</dbReference>
<dbReference type="UCSC" id="uc002gyp.3">
    <property type="organism name" value="human"/>
</dbReference>
<dbReference type="AGR" id="HGNC:16823"/>
<dbReference type="CTD" id="8834"/>
<dbReference type="DisGeNET" id="8834"/>
<dbReference type="GeneCards" id="TMEM11"/>
<dbReference type="HGNC" id="HGNC:16823">
    <property type="gene designation" value="TMEM11"/>
</dbReference>
<dbReference type="HPA" id="ENSG00000178307">
    <property type="expression patterns" value="Tissue enhanced (skeletal)"/>
</dbReference>
<dbReference type="MIM" id="618817">
    <property type="type" value="gene"/>
</dbReference>
<dbReference type="neXtProt" id="NX_P17152"/>
<dbReference type="OpenTargets" id="ENSG00000178307"/>
<dbReference type="PharmGKB" id="PA134893886"/>
<dbReference type="VEuPathDB" id="HostDB:ENSG00000178307"/>
<dbReference type="eggNOG" id="ENOG502QUAI">
    <property type="taxonomic scope" value="Eukaryota"/>
</dbReference>
<dbReference type="GeneTree" id="ENSGT00390000006617"/>
<dbReference type="HOGENOM" id="CLU_095460_0_0_1"/>
<dbReference type="InParanoid" id="P17152"/>
<dbReference type="OMA" id="IGNCLHK"/>
<dbReference type="OrthoDB" id="9970856at2759"/>
<dbReference type="PAN-GO" id="P17152">
    <property type="GO annotations" value="2 GO annotations based on evolutionary models"/>
</dbReference>
<dbReference type="PhylomeDB" id="P17152"/>
<dbReference type="TreeFam" id="TF324685"/>
<dbReference type="PathwayCommons" id="P17152"/>
<dbReference type="Reactome" id="R-HSA-8949613">
    <property type="pathway name" value="Cristae formation"/>
</dbReference>
<dbReference type="SignaLink" id="P17152"/>
<dbReference type="BioGRID-ORCS" id="8834">
    <property type="hits" value="33 hits in 1166 CRISPR screens"/>
</dbReference>
<dbReference type="ChiTaRS" id="TMEM11">
    <property type="organism name" value="human"/>
</dbReference>
<dbReference type="GenomeRNAi" id="8834"/>
<dbReference type="Pharos" id="P17152">
    <property type="development level" value="Tbio"/>
</dbReference>
<dbReference type="PRO" id="PR:P17152"/>
<dbReference type="Proteomes" id="UP000005640">
    <property type="component" value="Chromosome 17"/>
</dbReference>
<dbReference type="RNAct" id="P17152">
    <property type="molecule type" value="protein"/>
</dbReference>
<dbReference type="Bgee" id="ENSG00000178307">
    <property type="expression patterns" value="Expressed in hindlimb stylopod muscle and 199 other cell types or tissues"/>
</dbReference>
<dbReference type="GO" id="GO:0005743">
    <property type="term" value="C:mitochondrial inner membrane"/>
    <property type="evidence" value="ECO:0000314"/>
    <property type="project" value="UniProtKB"/>
</dbReference>
<dbReference type="GO" id="GO:0005739">
    <property type="term" value="C:mitochondrion"/>
    <property type="evidence" value="ECO:0000314"/>
    <property type="project" value="HPA"/>
</dbReference>
<dbReference type="GO" id="GO:0005886">
    <property type="term" value="C:plasma membrane"/>
    <property type="evidence" value="ECO:0000303"/>
    <property type="project" value="UniProtKB"/>
</dbReference>
<dbReference type="GO" id="GO:0007007">
    <property type="term" value="P:inner mitochondrial membrane organization"/>
    <property type="evidence" value="ECO:0000318"/>
    <property type="project" value="GO_Central"/>
</dbReference>
<dbReference type="GO" id="GO:0007005">
    <property type="term" value="P:mitochondrion organization"/>
    <property type="evidence" value="ECO:0000315"/>
    <property type="project" value="UniProtKB"/>
</dbReference>
<dbReference type="InterPro" id="IPR026120">
    <property type="entry name" value="TMEM11"/>
</dbReference>
<dbReference type="PANTHER" id="PTHR15099">
    <property type="entry name" value="PROTEIN PM1"/>
    <property type="match status" value="1"/>
</dbReference>
<dbReference type="PANTHER" id="PTHR15099:SF2">
    <property type="entry name" value="TRANSMEMBRANE PROTEIN 11, MITOCHONDRIAL"/>
    <property type="match status" value="1"/>
</dbReference>
<dbReference type="Pfam" id="PF14972">
    <property type="entry name" value="Mito_morph_reg"/>
    <property type="match status" value="1"/>
</dbReference>
<gene>
    <name type="primary">TMEM11</name>
    <name type="synonym">C17orf35</name>
    <name type="synonym">PM1</name>
</gene>
<reference key="1">
    <citation type="journal article" date="1990" name="Nucleic Acids Res.">
        <title>Nucleotide sequence of a cDNA encoding a protein with primary structural similarity to G-protein coupled receptors.</title>
        <authorList>
            <person name="Murphy P.M."/>
            <person name="Malech H.L."/>
        </authorList>
    </citation>
    <scope>NUCLEOTIDE SEQUENCE [MRNA]</scope>
</reference>
<reference key="2">
    <citation type="journal article" date="2004" name="Nat. Genet.">
        <title>Complete sequencing and characterization of 21,243 full-length human cDNAs.</title>
        <authorList>
            <person name="Ota T."/>
            <person name="Suzuki Y."/>
            <person name="Nishikawa T."/>
            <person name="Otsuki T."/>
            <person name="Sugiyama T."/>
            <person name="Irie R."/>
            <person name="Wakamatsu A."/>
            <person name="Hayashi K."/>
            <person name="Sato H."/>
            <person name="Nagai K."/>
            <person name="Kimura K."/>
            <person name="Makita H."/>
            <person name="Sekine M."/>
            <person name="Obayashi M."/>
            <person name="Nishi T."/>
            <person name="Shibahara T."/>
            <person name="Tanaka T."/>
            <person name="Ishii S."/>
            <person name="Yamamoto J."/>
            <person name="Saito K."/>
            <person name="Kawai Y."/>
            <person name="Isono Y."/>
            <person name="Nakamura Y."/>
            <person name="Nagahari K."/>
            <person name="Murakami K."/>
            <person name="Yasuda T."/>
            <person name="Iwayanagi T."/>
            <person name="Wagatsuma M."/>
            <person name="Shiratori A."/>
            <person name="Sudo H."/>
            <person name="Hosoiri T."/>
            <person name="Kaku Y."/>
            <person name="Kodaira H."/>
            <person name="Kondo H."/>
            <person name="Sugawara M."/>
            <person name="Takahashi M."/>
            <person name="Kanda K."/>
            <person name="Yokoi T."/>
            <person name="Furuya T."/>
            <person name="Kikkawa E."/>
            <person name="Omura Y."/>
            <person name="Abe K."/>
            <person name="Kamihara K."/>
            <person name="Katsuta N."/>
            <person name="Sato K."/>
            <person name="Tanikawa M."/>
            <person name="Yamazaki M."/>
            <person name="Ninomiya K."/>
            <person name="Ishibashi T."/>
            <person name="Yamashita H."/>
            <person name="Murakawa K."/>
            <person name="Fujimori K."/>
            <person name="Tanai H."/>
            <person name="Kimata M."/>
            <person name="Watanabe M."/>
            <person name="Hiraoka S."/>
            <person name="Chiba Y."/>
            <person name="Ishida S."/>
            <person name="Ono Y."/>
            <person name="Takiguchi S."/>
            <person name="Watanabe S."/>
            <person name="Yosida M."/>
            <person name="Hotuta T."/>
            <person name="Kusano J."/>
            <person name="Kanehori K."/>
            <person name="Takahashi-Fujii A."/>
            <person name="Hara H."/>
            <person name="Tanase T.-O."/>
            <person name="Nomura Y."/>
            <person name="Togiya S."/>
            <person name="Komai F."/>
            <person name="Hara R."/>
            <person name="Takeuchi K."/>
            <person name="Arita M."/>
            <person name="Imose N."/>
            <person name="Musashino K."/>
            <person name="Yuuki H."/>
            <person name="Oshima A."/>
            <person name="Sasaki N."/>
            <person name="Aotsuka S."/>
            <person name="Yoshikawa Y."/>
            <person name="Matsunawa H."/>
            <person name="Ichihara T."/>
            <person name="Shiohata N."/>
            <person name="Sano S."/>
            <person name="Moriya S."/>
            <person name="Momiyama H."/>
            <person name="Satoh N."/>
            <person name="Takami S."/>
            <person name="Terashima Y."/>
            <person name="Suzuki O."/>
            <person name="Nakagawa S."/>
            <person name="Senoh A."/>
            <person name="Mizoguchi H."/>
            <person name="Goto Y."/>
            <person name="Shimizu F."/>
            <person name="Wakebe H."/>
            <person name="Hishigaki H."/>
            <person name="Watanabe T."/>
            <person name="Sugiyama A."/>
            <person name="Takemoto M."/>
            <person name="Kawakami B."/>
            <person name="Yamazaki M."/>
            <person name="Watanabe K."/>
            <person name="Kumagai A."/>
            <person name="Itakura S."/>
            <person name="Fukuzumi Y."/>
            <person name="Fujimori Y."/>
            <person name="Komiyama M."/>
            <person name="Tashiro H."/>
            <person name="Tanigami A."/>
            <person name="Fujiwara T."/>
            <person name="Ono T."/>
            <person name="Yamada K."/>
            <person name="Fujii Y."/>
            <person name="Ozaki K."/>
            <person name="Hirao M."/>
            <person name="Ohmori Y."/>
            <person name="Kawabata A."/>
            <person name="Hikiji T."/>
            <person name="Kobatake N."/>
            <person name="Inagaki H."/>
            <person name="Ikema Y."/>
            <person name="Okamoto S."/>
            <person name="Okitani R."/>
            <person name="Kawakami T."/>
            <person name="Noguchi S."/>
            <person name="Itoh T."/>
            <person name="Shigeta K."/>
            <person name="Senba T."/>
            <person name="Matsumura K."/>
            <person name="Nakajima Y."/>
            <person name="Mizuno T."/>
            <person name="Morinaga M."/>
            <person name="Sasaki M."/>
            <person name="Togashi T."/>
            <person name="Oyama M."/>
            <person name="Hata H."/>
            <person name="Watanabe M."/>
            <person name="Komatsu T."/>
            <person name="Mizushima-Sugano J."/>
            <person name="Satoh T."/>
            <person name="Shirai Y."/>
            <person name="Takahashi Y."/>
            <person name="Nakagawa K."/>
            <person name="Okumura K."/>
            <person name="Nagase T."/>
            <person name="Nomura N."/>
            <person name="Kikuchi H."/>
            <person name="Masuho Y."/>
            <person name="Yamashita R."/>
            <person name="Nakai K."/>
            <person name="Yada T."/>
            <person name="Nakamura Y."/>
            <person name="Ohara O."/>
            <person name="Isogai T."/>
            <person name="Sugano S."/>
        </authorList>
    </citation>
    <scope>NUCLEOTIDE SEQUENCE [LARGE SCALE MRNA]</scope>
    <source>
        <tissue>Thalamus</tissue>
    </source>
</reference>
<reference key="3">
    <citation type="submission" date="2003-05" db="EMBL/GenBank/DDBJ databases">
        <title>Cloning of human full-length CDSs in BD Creator(TM) system donor vector.</title>
        <authorList>
            <person name="Kalnine N."/>
            <person name="Chen X."/>
            <person name="Rolfs A."/>
            <person name="Halleck A."/>
            <person name="Hines L."/>
            <person name="Eisenstein S."/>
            <person name="Koundinya M."/>
            <person name="Raphael J."/>
            <person name="Moreira D."/>
            <person name="Kelley T."/>
            <person name="LaBaer J."/>
            <person name="Lin Y."/>
            <person name="Phelan M."/>
            <person name="Farmer A."/>
        </authorList>
    </citation>
    <scope>NUCLEOTIDE SEQUENCE [LARGE SCALE MRNA]</scope>
</reference>
<reference key="4">
    <citation type="journal article" date="2006" name="Nature">
        <title>DNA sequence of human chromosome 17 and analysis of rearrangement in the human lineage.</title>
        <authorList>
            <person name="Zody M.C."/>
            <person name="Garber M."/>
            <person name="Adams D.J."/>
            <person name="Sharpe T."/>
            <person name="Harrow J."/>
            <person name="Lupski J.R."/>
            <person name="Nicholson C."/>
            <person name="Searle S.M."/>
            <person name="Wilming L."/>
            <person name="Young S.K."/>
            <person name="Abouelleil A."/>
            <person name="Allen N.R."/>
            <person name="Bi W."/>
            <person name="Bloom T."/>
            <person name="Borowsky M.L."/>
            <person name="Bugalter B.E."/>
            <person name="Butler J."/>
            <person name="Chang J.L."/>
            <person name="Chen C.-K."/>
            <person name="Cook A."/>
            <person name="Corum B."/>
            <person name="Cuomo C.A."/>
            <person name="de Jong P.J."/>
            <person name="DeCaprio D."/>
            <person name="Dewar K."/>
            <person name="FitzGerald M."/>
            <person name="Gilbert J."/>
            <person name="Gibson R."/>
            <person name="Gnerre S."/>
            <person name="Goldstein S."/>
            <person name="Grafham D.V."/>
            <person name="Grocock R."/>
            <person name="Hafez N."/>
            <person name="Hagopian D.S."/>
            <person name="Hart E."/>
            <person name="Norman C.H."/>
            <person name="Humphray S."/>
            <person name="Jaffe D.B."/>
            <person name="Jones M."/>
            <person name="Kamal M."/>
            <person name="Khodiyar V.K."/>
            <person name="LaButti K."/>
            <person name="Laird G."/>
            <person name="Lehoczky J."/>
            <person name="Liu X."/>
            <person name="Lokyitsang T."/>
            <person name="Loveland J."/>
            <person name="Lui A."/>
            <person name="Macdonald P."/>
            <person name="Major J.E."/>
            <person name="Matthews L."/>
            <person name="Mauceli E."/>
            <person name="McCarroll S.A."/>
            <person name="Mihalev A.H."/>
            <person name="Mudge J."/>
            <person name="Nguyen C."/>
            <person name="Nicol R."/>
            <person name="O'Leary S.B."/>
            <person name="Osoegawa K."/>
            <person name="Schwartz D.C."/>
            <person name="Shaw-Smith C."/>
            <person name="Stankiewicz P."/>
            <person name="Steward C."/>
            <person name="Swarbreck D."/>
            <person name="Venkataraman V."/>
            <person name="Whittaker C.A."/>
            <person name="Yang X."/>
            <person name="Zimmer A.R."/>
            <person name="Bradley A."/>
            <person name="Hubbard T."/>
            <person name="Birren B.W."/>
            <person name="Rogers J."/>
            <person name="Lander E.S."/>
            <person name="Nusbaum C."/>
        </authorList>
    </citation>
    <scope>NUCLEOTIDE SEQUENCE [LARGE SCALE GENOMIC DNA]</scope>
</reference>
<reference key="5">
    <citation type="submission" date="2005-09" db="EMBL/GenBank/DDBJ databases">
        <authorList>
            <person name="Mural R.J."/>
            <person name="Istrail S."/>
            <person name="Sutton G.G."/>
            <person name="Florea L."/>
            <person name="Halpern A.L."/>
            <person name="Mobarry C.M."/>
            <person name="Lippert R."/>
            <person name="Walenz B."/>
            <person name="Shatkay H."/>
            <person name="Dew I."/>
            <person name="Miller J.R."/>
            <person name="Flanigan M.J."/>
            <person name="Edwards N.J."/>
            <person name="Bolanos R."/>
            <person name="Fasulo D."/>
            <person name="Halldorsson B.V."/>
            <person name="Hannenhalli S."/>
            <person name="Turner R."/>
            <person name="Yooseph S."/>
            <person name="Lu F."/>
            <person name="Nusskern D.R."/>
            <person name="Shue B.C."/>
            <person name="Zheng X.H."/>
            <person name="Zhong F."/>
            <person name="Delcher A.L."/>
            <person name="Huson D.H."/>
            <person name="Kravitz S.A."/>
            <person name="Mouchard L."/>
            <person name="Reinert K."/>
            <person name="Remington K.A."/>
            <person name="Clark A.G."/>
            <person name="Waterman M.S."/>
            <person name="Eichler E.E."/>
            <person name="Adams M.D."/>
            <person name="Hunkapiller M.W."/>
            <person name="Myers E.W."/>
            <person name="Venter J.C."/>
        </authorList>
    </citation>
    <scope>NUCLEOTIDE SEQUENCE [LARGE SCALE GENOMIC DNA]</scope>
</reference>
<reference key="6">
    <citation type="journal article" date="2004" name="Genome Res.">
        <title>The status, quality, and expansion of the NIH full-length cDNA project: the Mammalian Gene Collection (MGC).</title>
        <authorList>
            <consortium name="The MGC Project Team"/>
        </authorList>
    </citation>
    <scope>NUCLEOTIDE SEQUENCE [LARGE SCALE MRNA]</scope>
    <source>
        <tissue>Kidney</tissue>
        <tissue>Placenta</tissue>
        <tissue>Prostate</tissue>
    </source>
</reference>
<reference key="7">
    <citation type="journal article" date="2011" name="BMC Syst. Biol.">
        <title>Initial characterization of the human central proteome.</title>
        <authorList>
            <person name="Burkard T.R."/>
            <person name="Planyavsky M."/>
            <person name="Kaupe I."/>
            <person name="Breitwieser F.P."/>
            <person name="Buerckstuemmer T."/>
            <person name="Bennett K.L."/>
            <person name="Superti-Furga G."/>
            <person name="Colinge J."/>
        </authorList>
    </citation>
    <scope>IDENTIFICATION BY MASS SPECTROMETRY [LARGE SCALE ANALYSIS]</scope>
</reference>
<reference key="8">
    <citation type="journal article" date="2011" name="EMBO Rep.">
        <title>Inner-membrane proteins PMI/TMEM11 regulate mitochondrial morphogenesis independently of the DRP1/MFN fission/fusion pathways.</title>
        <authorList>
            <person name="Rival T."/>
            <person name="Macchi M."/>
            <person name="Arnaune-Pelloquin L."/>
            <person name="Poidevin M."/>
            <person name="Maillet F."/>
            <person name="Richard F."/>
            <person name="Fatmi A."/>
            <person name="Belenguer P."/>
            <person name="Royet J."/>
        </authorList>
    </citation>
    <scope>FUNCTION</scope>
    <scope>SUBCELLULAR LOCATION</scope>
    <scope>TOPOLOGY</scope>
</reference>
<reference key="9">
    <citation type="journal article" date="2013" name="J. Proteome Res.">
        <title>Toward a comprehensive characterization of a human cancer cell phosphoproteome.</title>
        <authorList>
            <person name="Zhou H."/>
            <person name="Di Palma S."/>
            <person name="Preisinger C."/>
            <person name="Peng M."/>
            <person name="Polat A.N."/>
            <person name="Heck A.J."/>
            <person name="Mohammed S."/>
        </authorList>
    </citation>
    <scope>IDENTIFICATION BY MASS SPECTROMETRY [LARGE SCALE ANALYSIS]</scope>
    <source>
        <tissue>Cervix carcinoma</tissue>
    </source>
</reference>
<reference key="10">
    <citation type="journal article" date="2014" name="J. Proteomics">
        <title>An enzyme assisted RP-RPLC approach for in-depth analysis of human liver phosphoproteome.</title>
        <authorList>
            <person name="Bian Y."/>
            <person name="Song C."/>
            <person name="Cheng K."/>
            <person name="Dong M."/>
            <person name="Wang F."/>
            <person name="Huang J."/>
            <person name="Sun D."/>
            <person name="Wang L."/>
            <person name="Ye M."/>
            <person name="Zou H."/>
        </authorList>
    </citation>
    <scope>IDENTIFICATION BY MASS SPECTROMETRY [LARGE SCALE ANALYSIS]</scope>
    <source>
        <tissue>Liver</tissue>
    </source>
</reference>
<reference key="11">
    <citation type="journal article" date="2015" name="Elife">
        <title>QIL1 is a novel mitochondrial protein required for MICOS complex stability and cristae morphology.</title>
        <authorList>
            <person name="Guarani V."/>
            <person name="McNeill E.M."/>
            <person name="Paulo J.A."/>
            <person name="Huttlin E.L."/>
            <person name="Froehlich F."/>
            <person name="Gygi S.P."/>
            <person name="Van Vactor D."/>
            <person name="Harper J.W."/>
        </authorList>
    </citation>
    <scope>INTERACTION WITH THE MICOS COMPLEX</scope>
    <scope>INTERACTION WITH IMMT</scope>
</reference>
<reference key="12">
    <citation type="journal article" date="2015" name="Proteomics">
        <title>N-terminome analysis of the human mitochondrial proteome.</title>
        <authorList>
            <person name="Vaca Jacome A.S."/>
            <person name="Rabilloud T."/>
            <person name="Schaeffer-Reiss C."/>
            <person name="Rompais M."/>
            <person name="Ayoub D."/>
            <person name="Lane L."/>
            <person name="Bairoch A."/>
            <person name="Van Dorsselaer A."/>
            <person name="Carapito C."/>
        </authorList>
    </citation>
    <scope>IDENTIFICATION BY MASS SPECTROMETRY [LARGE SCALE ANALYSIS]</scope>
</reference>
<protein>
    <recommendedName>
        <fullName>Transmembrane protein 11, mitochondrial</fullName>
    </recommendedName>
    <alternativeName>
        <fullName>Protein PM1</fullName>
    </alternativeName>
    <alternativeName>
        <fullName>Protein PMI</fullName>
    </alternativeName>
</protein>
<name>TMM11_HUMAN</name>
<comment type="function">
    <text evidence="3">Plays a role in mitochondrial morphogenesis.</text>
</comment>
<comment type="subunit">
    <text evidence="4">Associates with the mitochondrial contact site and cristae organizing system (MICOS) complex, composed of at least MICOS10/MIC10, CHCHD3/MIC19, CHCHD6/MIC25, APOOL/MIC27, IMMT/MIC60, APOO/MIC23/MIC26 and QIL1/MIC13. This complex was also known under the names MINOS or MitOS complex. The MICOS complex associates with mitochondrial outer membrane proteins SAMM50, MTX1, MTX2 and DNAJC11, mitochondrial inner membrane protein TMEM11 and with HSPA9. Interacts with IMMT/MIC60.</text>
</comment>
<comment type="interaction">
    <interactant intactId="EBI-723946">
        <id>P17152</id>
    </interactant>
    <interactant intactId="EBI-11343438">
        <id>Q3SXY8</id>
        <label>ARL13B</label>
    </interactant>
    <organismsDiffer>false</organismsDiffer>
    <experiments>3</experiments>
</comment>
<comment type="interaction">
    <interactant intactId="EBI-723946">
        <id>P17152</id>
    </interactant>
    <interactant intactId="EBI-700794">
        <id>Q13323</id>
        <label>BIK</label>
    </interactant>
    <organismsDiffer>false</organismsDiffer>
    <experiments>3</experiments>
</comment>
<comment type="interaction">
    <interactant intactId="EBI-723946">
        <id>P17152</id>
    </interactant>
    <interactant intactId="EBI-749464">
        <id>Q12983</id>
        <label>BNIP3</label>
    </interactant>
    <organismsDiffer>false</organismsDiffer>
    <experiments>12</experiments>
</comment>
<comment type="interaction">
    <interactant intactId="EBI-723946">
        <id>P17152</id>
    </interactant>
    <interactant intactId="EBI-849893">
        <id>O60238</id>
        <label>BNIP3L</label>
    </interactant>
    <organismsDiffer>false</organismsDiffer>
    <experiments>9</experiments>
</comment>
<comment type="interaction">
    <interactant intactId="EBI-723946">
        <id>P17152</id>
    </interactant>
    <interactant intactId="EBI-6873045">
        <id>Q6NSX1</id>
        <label>CCDC70</label>
    </interactant>
    <organismsDiffer>false</organismsDiffer>
    <experiments>3</experiments>
</comment>
<comment type="interaction">
    <interactant intactId="EBI-723946">
        <id>P17152</id>
    </interactant>
    <interactant intactId="EBI-7797864">
        <id>P11912</id>
        <label>CD79A</label>
    </interactant>
    <organismsDiffer>false</organismsDiffer>
    <experiments>3</experiments>
</comment>
<comment type="interaction">
    <interactant intactId="EBI-723946">
        <id>P17152</id>
    </interactant>
    <interactant intactId="EBI-740744">
        <id>O95471</id>
        <label>CLDN7</label>
    </interactant>
    <organismsDiffer>false</organismsDiffer>
    <experiments>3</experiments>
</comment>
<comment type="interaction">
    <interactant intactId="EBI-723946">
        <id>P17152</id>
    </interactant>
    <interactant intactId="EBI-6942903">
        <id>Q96BA8</id>
        <label>CREB3L1</label>
    </interactant>
    <organismsDiffer>false</organismsDiffer>
    <experiments>6</experiments>
</comment>
<comment type="interaction">
    <interactant intactId="EBI-723946">
        <id>P17152</id>
    </interactant>
    <interactant intactId="EBI-8646596">
        <id>P49447</id>
        <label>CYB561</label>
    </interactant>
    <organismsDiffer>false</organismsDiffer>
    <experiments>3</experiments>
</comment>
<comment type="interaction">
    <interactant intactId="EBI-723946">
        <id>P17152</id>
    </interactant>
    <interactant intactId="EBI-19113794">
        <id>Q8WUJ1</id>
        <label>CYB5D2</label>
    </interactant>
    <organismsDiffer>false</organismsDiffer>
    <experiments>3</experiments>
</comment>
<comment type="interaction">
    <interactant intactId="EBI-723946">
        <id>P17152</id>
    </interactant>
    <interactant intactId="EBI-3915253">
        <id>Q15125</id>
        <label>EBP</label>
    </interactant>
    <organismsDiffer>false</organismsDiffer>
    <experiments>3</experiments>
</comment>
<comment type="interaction">
    <interactant intactId="EBI-723946">
        <id>P17152</id>
    </interactant>
    <interactant intactId="EBI-18535450">
        <id>Q9GZR5</id>
        <label>ELOVL4</label>
    </interactant>
    <organismsDiffer>false</organismsDiffer>
    <experiments>3</experiments>
</comment>
<comment type="interaction">
    <interactant intactId="EBI-723946">
        <id>P17152</id>
    </interactant>
    <interactant intactId="EBI-18636064">
        <id>Q8TBP5</id>
        <label>FAM174A</label>
    </interactant>
    <organismsDiffer>false</organismsDiffer>
    <experiments>3</experiments>
</comment>
<comment type="interaction">
    <interactant intactId="EBI-723946">
        <id>P17152</id>
    </interactant>
    <interactant intactId="EBI-18304435">
        <id>Q5JX71</id>
        <label>FAM209A</label>
    </interactant>
    <organismsDiffer>false</organismsDiffer>
    <experiments>3</experiments>
</comment>
<comment type="interaction">
    <interactant intactId="EBI-723946">
        <id>P17152</id>
    </interactant>
    <interactant intactId="EBI-18938272">
        <id>Q96KR6</id>
        <label>FAM210B</label>
    </interactant>
    <organismsDiffer>false</organismsDiffer>
    <experiments>3</experiments>
</comment>
<comment type="interaction">
    <interactant intactId="EBI-723946">
        <id>P17152</id>
    </interactant>
    <interactant intactId="EBI-743099">
        <id>Q969F0</id>
        <label>FATE1</label>
    </interactant>
    <organismsDiffer>false</organismsDiffer>
    <experiments>4</experiments>
</comment>
<comment type="interaction">
    <interactant intactId="EBI-723946">
        <id>P17152</id>
    </interactant>
    <interactant intactId="EBI-2833872">
        <id>O15552</id>
        <label>FFAR2</label>
    </interactant>
    <organismsDiffer>false</organismsDiffer>
    <experiments>3</experiments>
</comment>
<comment type="interaction">
    <interactant intactId="EBI-723946">
        <id>P17152</id>
    </interactant>
    <interactant intactId="EBI-12831526">
        <id>Q9NTQ9</id>
        <label>GJB4</label>
    </interactant>
    <organismsDiffer>false</organismsDiffer>
    <experiments>3</experiments>
</comment>
<comment type="interaction">
    <interactant intactId="EBI-723946">
        <id>P17152</id>
    </interactant>
    <interactant intactId="EBI-3917143">
        <id>Q5T7V8</id>
        <label>GORAB</label>
    </interactant>
    <organismsDiffer>false</organismsDiffer>
    <experiments>3</experiments>
</comment>
<comment type="interaction">
    <interactant intactId="EBI-723946">
        <id>P17152</id>
    </interactant>
    <interactant intactId="EBI-749265">
        <id>Q8N6L0</id>
        <label>KASH5</label>
    </interactant>
    <organismsDiffer>false</organismsDiffer>
    <experiments>5</experiments>
</comment>
<comment type="interaction">
    <interactant intactId="EBI-723946">
        <id>P17152</id>
    </interactant>
    <interactant intactId="EBI-750776">
        <id>O95214</id>
        <label>LEPROTL1</label>
    </interactant>
    <organismsDiffer>false</organismsDiffer>
    <experiments>3</experiments>
</comment>
<comment type="interaction">
    <interactant intactId="EBI-723946">
        <id>P17152</id>
    </interactant>
    <interactant intactId="EBI-5454865">
        <id>Q6IN84</id>
        <label>MRM1</label>
    </interactant>
    <organismsDiffer>false</organismsDiffer>
    <experiments>3</experiments>
</comment>
<comment type="interaction">
    <interactant intactId="EBI-723946">
        <id>P17152</id>
    </interactant>
    <interactant intactId="EBI-949102">
        <id>Q15800</id>
        <label>MSMO1</label>
    </interactant>
    <organismsDiffer>false</organismsDiffer>
    <experiments>3</experiments>
</comment>
<comment type="interaction">
    <interactant intactId="EBI-723946">
        <id>P17152</id>
    </interactant>
    <interactant intactId="EBI-3923617">
        <id>Q9H2K0</id>
        <label>MTIF3</label>
    </interactant>
    <organismsDiffer>false</organismsDiffer>
    <experiments>3</experiments>
</comment>
<comment type="interaction">
    <interactant intactId="EBI-723946">
        <id>P17152</id>
    </interactant>
    <interactant intactId="EBI-17263240">
        <id>P15941-11</id>
        <label>MUC1</label>
    </interactant>
    <organismsDiffer>false</organismsDiffer>
    <experiments>3</experiments>
</comment>
<comment type="interaction">
    <interactant intactId="EBI-723946">
        <id>P17152</id>
    </interactant>
    <interactant intactId="EBI-1224896">
        <id>O75489</id>
        <label>NDUFS3</label>
    </interactant>
    <organismsDiffer>false</organismsDiffer>
    <experiments>3</experiments>
</comment>
<comment type="interaction">
    <interactant intactId="EBI-723946">
        <id>P17152</id>
    </interactant>
    <interactant intactId="EBI-9087860">
        <id>P32243-2</id>
        <label>OTX2</label>
    </interactant>
    <organismsDiffer>false</organismsDiffer>
    <experiments>3</experiments>
</comment>
<comment type="interaction">
    <interactant intactId="EBI-723946">
        <id>P17152</id>
    </interactant>
    <interactant intactId="EBI-716063">
        <id>Q13113</id>
        <label>PDZK1IP1</label>
    </interactant>
    <organismsDiffer>false</organismsDiffer>
    <experiments>3</experiments>
</comment>
<comment type="interaction">
    <interactant intactId="EBI-723946">
        <id>P17152</id>
    </interactant>
    <interactant intactId="EBI-594836">
        <id>O00623</id>
        <label>PEX12</label>
    </interactant>
    <organismsDiffer>false</organismsDiffer>
    <experiments>3</experiments>
</comment>
<comment type="interaction">
    <interactant intactId="EBI-723946">
        <id>P17152</id>
    </interactant>
    <interactant intactId="EBI-10192441">
        <id>Q86VR2</id>
        <label>RETREG3</label>
    </interactant>
    <organismsDiffer>false</organismsDiffer>
    <experiments>3</experiments>
</comment>
<comment type="interaction">
    <interactant intactId="EBI-723946">
        <id>P17152</id>
    </interactant>
    <interactant intactId="EBI-12375429">
        <id>Q7Z5B4-5</id>
        <label>RIC3</label>
    </interactant>
    <organismsDiffer>false</organismsDiffer>
    <experiments>3</experiments>
</comment>
<comment type="interaction">
    <interactant intactId="EBI-723946">
        <id>P17152</id>
    </interactant>
    <interactant intactId="EBI-2372399">
        <id>O60930</id>
        <label>RNASEH1</label>
    </interactant>
    <organismsDiffer>false</organismsDiffer>
    <experiments>3</experiments>
</comment>
<comment type="interaction">
    <interactant intactId="EBI-723946">
        <id>P17152</id>
    </interactant>
    <interactant intactId="EBI-5663627">
        <id>Q16585</id>
        <label>SGCB</label>
    </interactant>
    <organismsDiffer>false</organismsDiffer>
    <experiments>3</experiments>
</comment>
<comment type="interaction">
    <interactant intactId="EBI-723946">
        <id>P17152</id>
    </interactant>
    <interactant intactId="EBI-18159983">
        <id>Q3KNW5</id>
        <label>SLC10A6</label>
    </interactant>
    <organismsDiffer>false</organismsDiffer>
    <experiments>3</experiments>
</comment>
<comment type="interaction">
    <interactant intactId="EBI-723946">
        <id>P17152</id>
    </interactant>
    <interactant intactId="EBI-10262251">
        <id>Q8IWU4</id>
        <label>SLC30A8</label>
    </interactant>
    <organismsDiffer>false</organismsDiffer>
    <experiments>3</experiments>
</comment>
<comment type="interaction">
    <interactant intactId="EBI-723946">
        <id>P17152</id>
    </interactant>
    <interactant intactId="EBI-18194029">
        <id>Q96L08</id>
        <label>SUSD3</label>
    </interactant>
    <organismsDiffer>false</organismsDiffer>
    <experiments>3</experiments>
</comment>
<comment type="interaction">
    <interactant intactId="EBI-723946">
        <id>P17152</id>
    </interactant>
    <interactant intactId="EBI-19027521">
        <id>Q8N6K0</id>
        <label>TEX29</label>
    </interactant>
    <organismsDiffer>false</organismsDiffer>
    <experiments>3</experiments>
</comment>
<comment type="interaction">
    <interactant intactId="EBI-723946">
        <id>P17152</id>
    </interactant>
    <interactant intactId="EBI-2821497">
        <id>Q9BVX2</id>
        <label>TMEM106C</label>
    </interactant>
    <organismsDiffer>false</organismsDiffer>
    <experiments>3</experiments>
</comment>
<comment type="interaction">
    <interactant intactId="EBI-723946">
        <id>P17152</id>
    </interactant>
    <interactant intactId="EBI-8638294">
        <id>Q9NUH8</id>
        <label>TMEM14B</label>
    </interactant>
    <organismsDiffer>false</organismsDiffer>
    <experiments>3</experiments>
</comment>
<comment type="interaction">
    <interactant intactId="EBI-723946">
        <id>P17152</id>
    </interactant>
    <interactant intactId="EBI-6269551">
        <id>Q6UW68</id>
        <label>TMEM205</label>
    </interactant>
    <organismsDiffer>false</organismsDiffer>
    <experiments>3</experiments>
</comment>
<comment type="interaction">
    <interactant intactId="EBI-723946">
        <id>P17152</id>
    </interactant>
    <interactant intactId="EBI-10982110">
        <id>Q96Q45-2</id>
        <label>TMEM237</label>
    </interactant>
    <organismsDiffer>false</organismsDiffer>
    <experiments>3</experiments>
</comment>
<comment type="interaction">
    <interactant intactId="EBI-723946">
        <id>P17152</id>
    </interactant>
    <interactant intactId="EBI-17198826">
        <id>Q6PEY1</id>
        <label>TMEM88</label>
    </interactant>
    <organismsDiffer>false</organismsDiffer>
    <experiments>3</experiments>
</comment>
<comment type="interaction">
    <interactant intactId="EBI-723946">
        <id>P17152</id>
    </interactant>
    <interactant intactId="EBI-12345267">
        <id>O15393-2</id>
        <label>TMPRSS2</label>
    </interactant>
    <organismsDiffer>false</organismsDiffer>
    <experiments>3</experiments>
</comment>
<comment type="interaction">
    <interactant intactId="EBI-723946">
        <id>P17152</id>
    </interactant>
    <interactant intactId="EBI-524131">
        <id>O43557</id>
        <label>TNFSF14</label>
    </interactant>
    <organismsDiffer>false</organismsDiffer>
    <experiments>4</experiments>
</comment>
<comment type="interaction">
    <interactant intactId="EBI-723946">
        <id>P17152</id>
    </interactant>
    <interactant intactId="EBI-751210">
        <id>Q96EC8</id>
        <label>YIPF6</label>
    </interactant>
    <organismsDiffer>false</organismsDiffer>
    <experiments>3</experiments>
</comment>
<comment type="subcellular location">
    <subcellularLocation>
        <location evidence="3">Mitochondrion inner membrane</location>
        <topology evidence="3">Multi-pass membrane protein</topology>
    </subcellularLocation>
</comment>
<comment type="similarity">
    <text evidence="5">Belongs to the TMEM11 family.</text>
</comment>
<keyword id="KW-0472">Membrane</keyword>
<keyword id="KW-0496">Mitochondrion</keyword>
<keyword id="KW-0999">Mitochondrion inner membrane</keyword>
<keyword id="KW-1267">Proteomics identification</keyword>
<keyword id="KW-1185">Reference proteome</keyword>
<keyword id="KW-0812">Transmembrane</keyword>
<keyword id="KW-1133">Transmembrane helix</keyword>
<organism>
    <name type="scientific">Homo sapiens</name>
    <name type="common">Human</name>
    <dbReference type="NCBI Taxonomy" id="9606"/>
    <lineage>
        <taxon>Eukaryota</taxon>
        <taxon>Metazoa</taxon>
        <taxon>Chordata</taxon>
        <taxon>Craniata</taxon>
        <taxon>Vertebrata</taxon>
        <taxon>Euteleostomi</taxon>
        <taxon>Mammalia</taxon>
        <taxon>Eutheria</taxon>
        <taxon>Euarchontoglires</taxon>
        <taxon>Primates</taxon>
        <taxon>Haplorrhini</taxon>
        <taxon>Catarrhini</taxon>
        <taxon>Hominidae</taxon>
        <taxon>Homo</taxon>
    </lineage>
</organism>
<proteinExistence type="evidence at protein level"/>
<sequence>MAAWGRRRLGPGSSGGSARERVSLSATDCYIVHEIYNGENAQDQFEYELEQALEAQYKYIVIEPTRIGDETARWITVGNCLHKTAVLAGTACLFTPLALPLDYSHYISLPAGVLSLACCTLYGISWQFDPCCKYQVEYDAYKLSRLPLHTLTSSTPVVLVRKDDLHRKRLHNTIALAALVYCVKKIYELYAV</sequence>
<feature type="chain" id="PRO_0000072562" description="Transmembrane protein 11, mitochondrial">
    <location>
        <begin position="1"/>
        <end position="192"/>
    </location>
</feature>
<feature type="transmembrane region" description="Helical" evidence="1">
    <location>
        <begin position="84"/>
        <end position="100"/>
    </location>
</feature>
<feature type="transmembrane region" description="Helical" evidence="1">
    <location>
        <begin position="107"/>
        <end position="124"/>
    </location>
</feature>
<feature type="region of interest" description="Disordered" evidence="2">
    <location>
        <begin position="1"/>
        <end position="20"/>
    </location>
</feature>